<sequence>MVKHSRGYRTRSRSLLRKSPRERGAVPSLSRLMVEYKEGDKVVIKINPSVHSGMPHRRYQGKVGKIIGKRGRAYLVSVTLGDKEKVIIVRPEHLVSFSSSG</sequence>
<gene>
    <name evidence="1" type="primary">rpl21e</name>
    <name type="ordered locus">M1627_1440</name>
</gene>
<dbReference type="EMBL" id="CP001401">
    <property type="protein sequence ID" value="ACP55322.1"/>
    <property type="molecule type" value="Genomic_DNA"/>
</dbReference>
<dbReference type="RefSeq" id="WP_012711388.1">
    <property type="nucleotide sequence ID" value="NC_012632.1"/>
</dbReference>
<dbReference type="SMR" id="C3N5P7"/>
<dbReference type="KEGG" id="sim:M1627_1440"/>
<dbReference type="HOGENOM" id="CLU_103610_1_1_2"/>
<dbReference type="Proteomes" id="UP000002307">
    <property type="component" value="Chromosome"/>
</dbReference>
<dbReference type="GO" id="GO:1990904">
    <property type="term" value="C:ribonucleoprotein complex"/>
    <property type="evidence" value="ECO:0007669"/>
    <property type="project" value="UniProtKB-KW"/>
</dbReference>
<dbReference type="GO" id="GO:0005840">
    <property type="term" value="C:ribosome"/>
    <property type="evidence" value="ECO:0007669"/>
    <property type="project" value="UniProtKB-KW"/>
</dbReference>
<dbReference type="GO" id="GO:0003735">
    <property type="term" value="F:structural constituent of ribosome"/>
    <property type="evidence" value="ECO:0007669"/>
    <property type="project" value="InterPro"/>
</dbReference>
<dbReference type="GO" id="GO:0006412">
    <property type="term" value="P:translation"/>
    <property type="evidence" value="ECO:0007669"/>
    <property type="project" value="UniProtKB-UniRule"/>
</dbReference>
<dbReference type="FunFam" id="2.30.30.70:FF:000001">
    <property type="entry name" value="60S ribosomal protein L21"/>
    <property type="match status" value="1"/>
</dbReference>
<dbReference type="Gene3D" id="2.30.30.70">
    <property type="entry name" value="Ribosomal protein L21"/>
    <property type="match status" value="1"/>
</dbReference>
<dbReference type="HAMAP" id="MF_00369">
    <property type="entry name" value="Ribosomal_eL21"/>
    <property type="match status" value="1"/>
</dbReference>
<dbReference type="InterPro" id="IPR001147">
    <property type="entry name" value="Ribosomal_eL21"/>
</dbReference>
<dbReference type="InterPro" id="IPR022856">
    <property type="entry name" value="Ribosomal_eL21_arc"/>
</dbReference>
<dbReference type="InterPro" id="IPR018259">
    <property type="entry name" value="Ribosomal_eL21_CS"/>
</dbReference>
<dbReference type="InterPro" id="IPR036948">
    <property type="entry name" value="Ribosomal_eL21_sf"/>
</dbReference>
<dbReference type="InterPro" id="IPR008991">
    <property type="entry name" value="Translation_prot_SH3-like_sf"/>
</dbReference>
<dbReference type="NCBIfam" id="NF003303">
    <property type="entry name" value="PRK04306.1"/>
    <property type="match status" value="1"/>
</dbReference>
<dbReference type="PANTHER" id="PTHR20981">
    <property type="entry name" value="60S RIBOSOMAL PROTEIN L21"/>
    <property type="match status" value="1"/>
</dbReference>
<dbReference type="Pfam" id="PF01157">
    <property type="entry name" value="Ribosomal_L21e"/>
    <property type="match status" value="1"/>
</dbReference>
<dbReference type="SUPFAM" id="SSF50104">
    <property type="entry name" value="Translation proteins SH3-like domain"/>
    <property type="match status" value="1"/>
</dbReference>
<dbReference type="PROSITE" id="PS01171">
    <property type="entry name" value="RIBOSOMAL_L21E"/>
    <property type="match status" value="1"/>
</dbReference>
<name>RL21_SACI3</name>
<evidence type="ECO:0000255" key="1">
    <source>
        <dbReference type="HAMAP-Rule" id="MF_00369"/>
    </source>
</evidence>
<evidence type="ECO:0000256" key="2">
    <source>
        <dbReference type="SAM" id="MobiDB-lite"/>
    </source>
</evidence>
<evidence type="ECO:0000305" key="3"/>
<organism>
    <name type="scientific">Saccharolobus islandicus (strain M.16.27)</name>
    <name type="common">Sulfolobus islandicus</name>
    <dbReference type="NCBI Taxonomy" id="427318"/>
    <lineage>
        <taxon>Archaea</taxon>
        <taxon>Thermoproteota</taxon>
        <taxon>Thermoprotei</taxon>
        <taxon>Sulfolobales</taxon>
        <taxon>Sulfolobaceae</taxon>
        <taxon>Saccharolobus</taxon>
    </lineage>
</organism>
<feature type="chain" id="PRO_1000205573" description="Large ribosomal subunit protein eL21">
    <location>
        <begin position="1"/>
        <end position="101"/>
    </location>
</feature>
<feature type="region of interest" description="Disordered" evidence="2">
    <location>
        <begin position="1"/>
        <end position="23"/>
    </location>
</feature>
<feature type="compositionally biased region" description="Basic residues" evidence="2">
    <location>
        <begin position="1"/>
        <end position="18"/>
    </location>
</feature>
<protein>
    <recommendedName>
        <fullName evidence="1">Large ribosomal subunit protein eL21</fullName>
    </recommendedName>
    <alternativeName>
        <fullName evidence="3">50S ribosomal protein L21e</fullName>
    </alternativeName>
</protein>
<keyword id="KW-0687">Ribonucleoprotein</keyword>
<keyword id="KW-0689">Ribosomal protein</keyword>
<accession>C3N5P7</accession>
<comment type="similarity">
    <text evidence="1">Belongs to the eukaryotic ribosomal protein eL21 family.</text>
</comment>
<reference key="1">
    <citation type="journal article" date="2009" name="Proc. Natl. Acad. Sci. U.S.A.">
        <title>Biogeography of the Sulfolobus islandicus pan-genome.</title>
        <authorList>
            <person name="Reno M.L."/>
            <person name="Held N.L."/>
            <person name="Fields C.J."/>
            <person name="Burke P.V."/>
            <person name="Whitaker R.J."/>
        </authorList>
    </citation>
    <scope>NUCLEOTIDE SEQUENCE [LARGE SCALE GENOMIC DNA]</scope>
    <source>
        <strain>M.16.27</strain>
    </source>
</reference>
<proteinExistence type="inferred from homology"/>